<comment type="function">
    <text evidence="1">Probable serine/threonine kinase.</text>
</comment>
<comment type="PTM">
    <text evidence="1">Autophosphorylated.</text>
</comment>
<evidence type="ECO:0000250" key="1">
    <source>
        <dbReference type="UniProtKB" id="P76393"/>
    </source>
</evidence>
<evidence type="ECO:0000255" key="2">
    <source>
        <dbReference type="PROSITE-ProRule" id="PRU00159"/>
    </source>
</evidence>
<name>YEGI_ECO57</name>
<dbReference type="EC" id="2.7.-.-" evidence="2"/>
<dbReference type="EMBL" id="AE005174">
    <property type="protein sequence ID" value="AAG57133.1"/>
    <property type="molecule type" value="Genomic_DNA"/>
</dbReference>
<dbReference type="EMBL" id="BA000007">
    <property type="protein sequence ID" value="BAB36302.2"/>
    <property type="molecule type" value="Genomic_DNA"/>
</dbReference>
<dbReference type="PIR" id="A85834">
    <property type="entry name" value="A85834"/>
</dbReference>
<dbReference type="PIR" id="G90988">
    <property type="entry name" value="G90988"/>
</dbReference>
<dbReference type="RefSeq" id="NP_310906.2">
    <property type="nucleotide sequence ID" value="NC_002695.1"/>
</dbReference>
<dbReference type="RefSeq" id="WP_001301756.1">
    <property type="nucleotide sequence ID" value="NZ_SWKA01000005.1"/>
</dbReference>
<dbReference type="STRING" id="155864.Z3239"/>
<dbReference type="GeneID" id="916581"/>
<dbReference type="KEGG" id="ece:Z3239"/>
<dbReference type="KEGG" id="ecs:ECs_2879"/>
<dbReference type="PATRIC" id="fig|386585.9.peg.3011"/>
<dbReference type="eggNOG" id="COG4248">
    <property type="taxonomic scope" value="Bacteria"/>
</dbReference>
<dbReference type="HOGENOM" id="CLU_022304_0_0_6"/>
<dbReference type="OMA" id="PGHLADC"/>
<dbReference type="Proteomes" id="UP000000558">
    <property type="component" value="Chromosome"/>
</dbReference>
<dbReference type="Proteomes" id="UP000002519">
    <property type="component" value="Chromosome"/>
</dbReference>
<dbReference type="GO" id="GO:0005524">
    <property type="term" value="F:ATP binding"/>
    <property type="evidence" value="ECO:0007669"/>
    <property type="project" value="UniProtKB-KW"/>
</dbReference>
<dbReference type="GO" id="GO:0004672">
    <property type="term" value="F:protein kinase activity"/>
    <property type="evidence" value="ECO:0007669"/>
    <property type="project" value="InterPro"/>
</dbReference>
<dbReference type="Gene3D" id="1.10.510.10">
    <property type="entry name" value="Transferase(Phosphotransferase) domain 1"/>
    <property type="match status" value="1"/>
</dbReference>
<dbReference type="InterPro" id="IPR011009">
    <property type="entry name" value="Kinase-like_dom_sf"/>
</dbReference>
<dbReference type="InterPro" id="IPR000719">
    <property type="entry name" value="Prot_kinase_dom"/>
</dbReference>
<dbReference type="InterPro" id="IPR016960">
    <property type="entry name" value="YegI-like"/>
</dbReference>
<dbReference type="PIRSF" id="PIRSF030823">
    <property type="entry name" value="UCP030823_PK_HhH"/>
    <property type="match status" value="1"/>
</dbReference>
<dbReference type="SUPFAM" id="SSF56112">
    <property type="entry name" value="Protein kinase-like (PK-like)"/>
    <property type="match status" value="1"/>
</dbReference>
<dbReference type="PROSITE" id="PS50011">
    <property type="entry name" value="PROTEIN_KINASE_DOM"/>
    <property type="match status" value="1"/>
</dbReference>
<keyword id="KW-0067">ATP-binding</keyword>
<keyword id="KW-0418">Kinase</keyword>
<keyword id="KW-0547">Nucleotide-binding</keyword>
<keyword id="KW-0597">Phosphoprotein</keyword>
<keyword id="KW-1185">Reference proteome</keyword>
<keyword id="KW-0808">Transferase</keyword>
<proteinExistence type="inferred from homology"/>
<sequence>MKPTLYTATGECVTPGRELGKGGEGAVYDINEFVDSVAKIYHTPPPALKQDKLAFMAATADAQLLNYVAWPQATLHGGRGGKVIGFMMPKVSGKEPIHMIYSPAHRRQSYPHCAWDFLLYVARNIASSFATVHEHGHVVGDVNQNSFMVGRDSKVVLIDSDSFQINANGTLHLCEVGVSHFTPPELQTLPSFVGFERTANHDNFGLALLIFHVLFGGRHPYSGVPLISDAGNALETDIAHFRYAYASDNQRRGLKPPPRSIPLSMLPGDVEAMFQQAFTESGVATARPTAKAWVAALDLLRQQLKKCTVSAMHVYPGHLTDCPWCALDNQGVIYFIDLGEEVITTSGDFVLAKVWAMVMASVAPPALQLPLPDHFQPTGRPLPLGLLRREYIILIEIALSALSLLLCGLQAEPRYIILVPVLAAIWIIGSLTSKVYKAEIQQRREAFNRAKMDYDHLVSQIQQLGGLEGFIAKRAMLEKMKDEILGLPEEEKRALAALHDTARERQKQKFLEGFFIDAASIPGVGPARKAALRSFGIETAADVTRRGVKQVKGFGDHLTQAVIDWKASCERRFVFRPNEAVTPAERQAVMAKMAAKRHRLESALTVGATELQRFRLHAPARTMPLMEPLRQAAEKLAQAQADLSRC</sequence>
<feature type="chain" id="PRO_0000169124" description="Protein kinase YegI">
    <location>
        <begin position="1"/>
        <end position="646"/>
    </location>
</feature>
<feature type="domain" description="Protein kinase" evidence="2">
    <location>
        <begin position="13"/>
        <end position="300"/>
    </location>
</feature>
<feature type="active site" description="Proton acceptor" evidence="2">
    <location>
        <position position="141"/>
    </location>
</feature>
<feature type="binding site" evidence="2">
    <location>
        <begin position="19"/>
        <end position="27"/>
    </location>
    <ligand>
        <name>ATP</name>
        <dbReference type="ChEBI" id="CHEBI:30616"/>
    </ligand>
</feature>
<feature type="binding site" evidence="2">
    <location>
        <position position="39"/>
    </location>
    <ligand>
        <name>ATP</name>
        <dbReference type="ChEBI" id="CHEBI:30616"/>
    </ligand>
</feature>
<protein>
    <recommendedName>
        <fullName evidence="1">Protein kinase YegI</fullName>
        <ecNumber evidence="2">2.7.-.-</ecNumber>
    </recommendedName>
</protein>
<reference key="1">
    <citation type="journal article" date="2001" name="Nature">
        <title>Genome sequence of enterohaemorrhagic Escherichia coli O157:H7.</title>
        <authorList>
            <person name="Perna N.T."/>
            <person name="Plunkett G. III"/>
            <person name="Burland V."/>
            <person name="Mau B."/>
            <person name="Glasner J.D."/>
            <person name="Rose D.J."/>
            <person name="Mayhew G.F."/>
            <person name="Evans P.S."/>
            <person name="Gregor J."/>
            <person name="Kirkpatrick H.A."/>
            <person name="Posfai G."/>
            <person name="Hackett J."/>
            <person name="Klink S."/>
            <person name="Boutin A."/>
            <person name="Shao Y."/>
            <person name="Miller L."/>
            <person name="Grotbeck E.J."/>
            <person name="Davis N.W."/>
            <person name="Lim A."/>
            <person name="Dimalanta E.T."/>
            <person name="Potamousis K."/>
            <person name="Apodaca J."/>
            <person name="Anantharaman T.S."/>
            <person name="Lin J."/>
            <person name="Yen G."/>
            <person name="Schwartz D.C."/>
            <person name="Welch R.A."/>
            <person name="Blattner F.R."/>
        </authorList>
    </citation>
    <scope>NUCLEOTIDE SEQUENCE [LARGE SCALE GENOMIC DNA]</scope>
    <source>
        <strain>O157:H7 / EDL933 / ATCC 700927 / EHEC</strain>
    </source>
</reference>
<reference key="2">
    <citation type="journal article" date="2001" name="DNA Res.">
        <title>Complete genome sequence of enterohemorrhagic Escherichia coli O157:H7 and genomic comparison with a laboratory strain K-12.</title>
        <authorList>
            <person name="Hayashi T."/>
            <person name="Makino K."/>
            <person name="Ohnishi M."/>
            <person name="Kurokawa K."/>
            <person name="Ishii K."/>
            <person name="Yokoyama K."/>
            <person name="Han C.-G."/>
            <person name="Ohtsubo E."/>
            <person name="Nakayama K."/>
            <person name="Murata T."/>
            <person name="Tanaka M."/>
            <person name="Tobe T."/>
            <person name="Iida T."/>
            <person name="Takami H."/>
            <person name="Honda T."/>
            <person name="Sasakawa C."/>
            <person name="Ogasawara N."/>
            <person name="Yasunaga T."/>
            <person name="Kuhara S."/>
            <person name="Shiba T."/>
            <person name="Hattori M."/>
            <person name="Shinagawa H."/>
        </authorList>
    </citation>
    <scope>NUCLEOTIDE SEQUENCE [LARGE SCALE GENOMIC DNA]</scope>
    <source>
        <strain>O157:H7 / Sakai / RIMD 0509952 / EHEC</strain>
    </source>
</reference>
<organism>
    <name type="scientific">Escherichia coli O157:H7</name>
    <dbReference type="NCBI Taxonomy" id="83334"/>
    <lineage>
        <taxon>Bacteria</taxon>
        <taxon>Pseudomonadati</taxon>
        <taxon>Pseudomonadota</taxon>
        <taxon>Gammaproteobacteria</taxon>
        <taxon>Enterobacterales</taxon>
        <taxon>Enterobacteriaceae</taxon>
        <taxon>Escherichia</taxon>
    </lineage>
</organism>
<gene>
    <name type="primary">yegI</name>
    <name type="ordered locus">Z3239</name>
    <name type="ordered locus">ECs2879</name>
</gene>
<accession>Q8X7J8</accession>